<sequence length="53" mass="6050">GDFTWNSLSGRSVRLAPVDIQSLSELERARLQEVAFTRLHQDYDLGCQITMPK</sequence>
<comment type="function">
    <text evidence="1">GTPase activator for the Rho-type GTPases by converting them to an inactive GDP-bound state. Could regulate the interactions of signaling molecules with the actin cytoskeleton. Promotes continuous elongation of cytoplasmic processes during cell motility and simultaneous retraction of the cell body changing the cell morphology (By similarity).</text>
</comment>
<comment type="subcellular location">
    <subcellularLocation>
        <location evidence="2">Cytoplasm</location>
    </subcellularLocation>
</comment>
<dbReference type="EMBL" id="AF012274">
    <property type="protein sequence ID" value="AAC60333.1"/>
    <property type="molecule type" value="Genomic_DNA"/>
</dbReference>
<dbReference type="STRING" id="31033.ENSTRUP00000087233"/>
<dbReference type="eggNOG" id="KOG2710">
    <property type="taxonomic scope" value="Eukaryota"/>
</dbReference>
<dbReference type="HOGENOM" id="CLU_012874_0_0_1"/>
<dbReference type="InParanoid" id="O57414"/>
<dbReference type="Proteomes" id="UP000005226">
    <property type="component" value="Unplaced"/>
</dbReference>
<dbReference type="GO" id="GO:0005737">
    <property type="term" value="C:cytoplasm"/>
    <property type="evidence" value="ECO:0007669"/>
    <property type="project" value="UniProtKB-SubCell"/>
</dbReference>
<dbReference type="GO" id="GO:0005096">
    <property type="term" value="F:GTPase activator activity"/>
    <property type="evidence" value="ECO:0007669"/>
    <property type="project" value="UniProtKB-KW"/>
</dbReference>
<dbReference type="InterPro" id="IPR037863">
    <property type="entry name" value="RHOGAP6/36"/>
</dbReference>
<dbReference type="PANTHER" id="PTHR12635:SF7">
    <property type="entry name" value="RHO GTPASE ACTIVATING PROTEIN 6-RELATED"/>
    <property type="match status" value="1"/>
</dbReference>
<dbReference type="PANTHER" id="PTHR12635">
    <property type="entry name" value="RHO-GTPASE-ACTIVATING PROTEIN 6 FAMILY MEMBER"/>
    <property type="match status" value="1"/>
</dbReference>
<reference key="1">
    <citation type="journal article" date="1997" name="Genomics">
        <title>Cloning and characterization of a novel rho-type GTPase-activating protein gene (ARHGAP6) from the critical region for microphthalmia with linear skin defects.</title>
        <authorList>
            <person name="Schaefer L."/>
            <person name="Prakash S.K."/>
            <person name="Zoghbi H.Y."/>
        </authorList>
    </citation>
    <scope>NUCLEOTIDE SEQUENCE [GENOMIC DNA]</scope>
</reference>
<gene>
    <name type="primary">arhgap6</name>
</gene>
<evidence type="ECO:0000250" key="1"/>
<evidence type="ECO:0000305" key="2"/>
<keyword id="KW-0963">Cytoplasm</keyword>
<keyword id="KW-0343">GTPase activation</keyword>
<keyword id="KW-1185">Reference proteome</keyword>
<organism>
    <name type="scientific">Takifugu rubripes</name>
    <name type="common">Japanese pufferfish</name>
    <name type="synonym">Fugu rubripes</name>
    <dbReference type="NCBI Taxonomy" id="31033"/>
    <lineage>
        <taxon>Eukaryota</taxon>
        <taxon>Metazoa</taxon>
        <taxon>Chordata</taxon>
        <taxon>Craniata</taxon>
        <taxon>Vertebrata</taxon>
        <taxon>Euteleostomi</taxon>
        <taxon>Actinopterygii</taxon>
        <taxon>Neopterygii</taxon>
        <taxon>Teleostei</taxon>
        <taxon>Neoteleostei</taxon>
        <taxon>Acanthomorphata</taxon>
        <taxon>Eupercaria</taxon>
        <taxon>Tetraodontiformes</taxon>
        <taxon>Tetradontoidea</taxon>
        <taxon>Tetraodontidae</taxon>
        <taxon>Takifugu</taxon>
    </lineage>
</organism>
<feature type="chain" id="PRO_0000056706" description="Rho GTPase-activating protein 6">
    <location>
        <begin position="1" status="less than"/>
        <end position="53" status="greater than"/>
    </location>
</feature>
<feature type="non-terminal residue">
    <location>
        <position position="1"/>
    </location>
</feature>
<feature type="non-terminal residue">
    <location>
        <position position="53"/>
    </location>
</feature>
<protein>
    <recommendedName>
        <fullName>Rho GTPase-activating protein 6</fullName>
    </recommendedName>
    <alternativeName>
        <fullName>Rho-type GTPase-activating protein 6</fullName>
    </alternativeName>
    <alternativeName>
        <fullName>Rho-type GTPase-activating protein RhoGAPX-1</fullName>
    </alternativeName>
</protein>
<name>RHG06_TAKRU</name>
<proteinExistence type="inferred from homology"/>
<accession>O57414</accession>